<evidence type="ECO:0000255" key="1">
    <source>
        <dbReference type="HAMAP-Rule" id="MF_00508"/>
    </source>
</evidence>
<evidence type="ECO:0000305" key="2"/>
<reference key="1">
    <citation type="journal article" date="2003" name="Genome Res.">
        <title>Genome sequence of an M3 strain of Streptococcus pyogenes reveals a large-scale genomic rearrangement in invasive strains and new insights into phage evolution.</title>
        <authorList>
            <person name="Nakagawa I."/>
            <person name="Kurokawa K."/>
            <person name="Yamashita A."/>
            <person name="Nakata M."/>
            <person name="Tomiyasu Y."/>
            <person name="Okahashi N."/>
            <person name="Kawabata S."/>
            <person name="Yamazaki K."/>
            <person name="Shiba T."/>
            <person name="Yasunaga T."/>
            <person name="Hayashi H."/>
            <person name="Hattori M."/>
            <person name="Hamada S."/>
        </authorList>
    </citation>
    <scope>NUCLEOTIDE SEQUENCE [LARGE SCALE GENOMIC DNA]</scope>
    <source>
        <strain>SSI-1</strain>
    </source>
</reference>
<dbReference type="EMBL" id="BA000034">
    <property type="protein sequence ID" value="BAC63135.1"/>
    <property type="molecule type" value="Genomic_DNA"/>
</dbReference>
<dbReference type="RefSeq" id="WP_001284518.1">
    <property type="nucleotide sequence ID" value="NC_004606.1"/>
</dbReference>
<dbReference type="SMR" id="P0DE63"/>
<dbReference type="GeneID" id="69900025"/>
<dbReference type="KEGG" id="sps:SPs0040"/>
<dbReference type="HOGENOM" id="CLU_122625_1_3_9"/>
<dbReference type="GO" id="GO:1990904">
    <property type="term" value="C:ribonucleoprotein complex"/>
    <property type="evidence" value="ECO:0007669"/>
    <property type="project" value="UniProtKB-KW"/>
</dbReference>
<dbReference type="GO" id="GO:0005840">
    <property type="term" value="C:ribosome"/>
    <property type="evidence" value="ECO:0007669"/>
    <property type="project" value="UniProtKB-KW"/>
</dbReference>
<dbReference type="GO" id="GO:0003735">
    <property type="term" value="F:structural constituent of ribosome"/>
    <property type="evidence" value="ECO:0007669"/>
    <property type="project" value="InterPro"/>
</dbReference>
<dbReference type="GO" id="GO:0000049">
    <property type="term" value="F:tRNA binding"/>
    <property type="evidence" value="ECO:0007669"/>
    <property type="project" value="UniProtKB-UniRule"/>
</dbReference>
<dbReference type="GO" id="GO:0006412">
    <property type="term" value="P:translation"/>
    <property type="evidence" value="ECO:0007669"/>
    <property type="project" value="UniProtKB-UniRule"/>
</dbReference>
<dbReference type="FunFam" id="3.30.70.600:FF:000001">
    <property type="entry name" value="30S ribosomal protein S10"/>
    <property type="match status" value="1"/>
</dbReference>
<dbReference type="Gene3D" id="3.30.70.600">
    <property type="entry name" value="Ribosomal protein S10 domain"/>
    <property type="match status" value="1"/>
</dbReference>
<dbReference type="HAMAP" id="MF_00508">
    <property type="entry name" value="Ribosomal_uS10"/>
    <property type="match status" value="1"/>
</dbReference>
<dbReference type="InterPro" id="IPR001848">
    <property type="entry name" value="Ribosomal_uS10"/>
</dbReference>
<dbReference type="InterPro" id="IPR018268">
    <property type="entry name" value="Ribosomal_uS10_CS"/>
</dbReference>
<dbReference type="InterPro" id="IPR027486">
    <property type="entry name" value="Ribosomal_uS10_dom"/>
</dbReference>
<dbReference type="InterPro" id="IPR036838">
    <property type="entry name" value="Ribosomal_uS10_dom_sf"/>
</dbReference>
<dbReference type="NCBIfam" id="NF001861">
    <property type="entry name" value="PRK00596.1"/>
    <property type="match status" value="1"/>
</dbReference>
<dbReference type="NCBIfam" id="TIGR01049">
    <property type="entry name" value="rpsJ_bact"/>
    <property type="match status" value="1"/>
</dbReference>
<dbReference type="PANTHER" id="PTHR11700">
    <property type="entry name" value="30S RIBOSOMAL PROTEIN S10 FAMILY MEMBER"/>
    <property type="match status" value="1"/>
</dbReference>
<dbReference type="Pfam" id="PF00338">
    <property type="entry name" value="Ribosomal_S10"/>
    <property type="match status" value="1"/>
</dbReference>
<dbReference type="PRINTS" id="PR00971">
    <property type="entry name" value="RIBOSOMALS10"/>
</dbReference>
<dbReference type="SMART" id="SM01403">
    <property type="entry name" value="Ribosomal_S10"/>
    <property type="match status" value="1"/>
</dbReference>
<dbReference type="SUPFAM" id="SSF54999">
    <property type="entry name" value="Ribosomal protein S10"/>
    <property type="match status" value="1"/>
</dbReference>
<dbReference type="PROSITE" id="PS00361">
    <property type="entry name" value="RIBOSOMAL_S10"/>
    <property type="match status" value="1"/>
</dbReference>
<keyword id="KW-0687">Ribonucleoprotein</keyword>
<keyword id="KW-0689">Ribosomal protein</keyword>
<protein>
    <recommendedName>
        <fullName evidence="1">Small ribosomal subunit protein uS10</fullName>
    </recommendedName>
    <alternativeName>
        <fullName evidence="2">30S ribosomal protein S10</fullName>
    </alternativeName>
</protein>
<proteinExistence type="inferred from homology"/>
<sequence length="102" mass="11614">MANKKIRIRLKAYEHRTLDTAAEKIVETATRTGATVAGPVPLPTERSLYTIIRATHKYKDSREQFEMRTHKRLVDIINPTQKTVDALMKLDLPSGVNVEIKL</sequence>
<feature type="chain" id="PRO_0000411521" description="Small ribosomal subunit protein uS10">
    <location>
        <begin position="1"/>
        <end position="102"/>
    </location>
</feature>
<comment type="function">
    <text evidence="1">Involved in the binding of tRNA to the ribosomes.</text>
</comment>
<comment type="subunit">
    <text evidence="1">Part of the 30S ribosomal subunit.</text>
</comment>
<comment type="similarity">
    <text evidence="1">Belongs to the universal ribosomal protein uS10 family.</text>
</comment>
<gene>
    <name evidence="1" type="primary">rpsJ</name>
    <name type="ordered locus">SPs0040</name>
</gene>
<organism>
    <name type="scientific">Streptococcus pyogenes serotype M3 (strain SSI-1)</name>
    <dbReference type="NCBI Taxonomy" id="193567"/>
    <lineage>
        <taxon>Bacteria</taxon>
        <taxon>Bacillati</taxon>
        <taxon>Bacillota</taxon>
        <taxon>Bacilli</taxon>
        <taxon>Lactobacillales</taxon>
        <taxon>Streptococcaceae</taxon>
        <taxon>Streptococcus</taxon>
    </lineage>
</organism>
<name>RS10_STRPQ</name>
<accession>P0DE63</accession>
<accession>P66342</accession>
<accession>Q9A1X5</accession>